<gene>
    <name type="ordered locus">VCM66_1816</name>
</gene>
<comment type="similarity">
    <text evidence="1">Belongs to the UPF0227 family.</text>
</comment>
<evidence type="ECO:0000255" key="1">
    <source>
        <dbReference type="HAMAP-Rule" id="MF_01047"/>
    </source>
</evidence>
<proteinExistence type="inferred from homology"/>
<dbReference type="EMBL" id="CP001233">
    <property type="protein sequence ID" value="ACP06122.1"/>
    <property type="molecule type" value="Genomic_DNA"/>
</dbReference>
<dbReference type="SMR" id="C3LNJ6"/>
<dbReference type="ESTHER" id="vibch-y1892">
    <property type="family name" value="abh_upf00227"/>
</dbReference>
<dbReference type="KEGG" id="vcm:VCM66_1816"/>
<dbReference type="HOGENOM" id="CLU_128769_0_0_6"/>
<dbReference type="Proteomes" id="UP000001217">
    <property type="component" value="Chromosome I"/>
</dbReference>
<dbReference type="Gene3D" id="3.40.50.1820">
    <property type="entry name" value="alpha/beta hydrolase"/>
    <property type="match status" value="1"/>
</dbReference>
<dbReference type="HAMAP" id="MF_01047">
    <property type="entry name" value="UPF0227"/>
    <property type="match status" value="1"/>
</dbReference>
<dbReference type="InterPro" id="IPR029058">
    <property type="entry name" value="AB_hydrolase_fold"/>
</dbReference>
<dbReference type="InterPro" id="IPR022987">
    <property type="entry name" value="UPF0227"/>
</dbReference>
<dbReference type="InterPro" id="IPR008886">
    <property type="entry name" value="UPF0227/Esterase_YqiA"/>
</dbReference>
<dbReference type="NCBIfam" id="NF003431">
    <property type="entry name" value="PRK04940.1"/>
    <property type="match status" value="1"/>
</dbReference>
<dbReference type="PANTHER" id="PTHR35602">
    <property type="entry name" value="ESTERASE YQIA-RELATED"/>
    <property type="match status" value="1"/>
</dbReference>
<dbReference type="PANTHER" id="PTHR35602:SF2">
    <property type="entry name" value="UPF0227 PROTEIN YCFP"/>
    <property type="match status" value="1"/>
</dbReference>
<dbReference type="Pfam" id="PF05728">
    <property type="entry name" value="UPF0227"/>
    <property type="match status" value="1"/>
</dbReference>
<dbReference type="SUPFAM" id="SSF53474">
    <property type="entry name" value="alpha/beta-Hydrolases"/>
    <property type="match status" value="1"/>
</dbReference>
<reference key="1">
    <citation type="journal article" date="2008" name="PLoS ONE">
        <title>A recalibrated molecular clock and independent origins for the cholera pandemic clones.</title>
        <authorList>
            <person name="Feng L."/>
            <person name="Reeves P.R."/>
            <person name="Lan R."/>
            <person name="Ren Y."/>
            <person name="Gao C."/>
            <person name="Zhou Z."/>
            <person name="Ren Y."/>
            <person name="Cheng J."/>
            <person name="Wang W."/>
            <person name="Wang J."/>
            <person name="Qian W."/>
            <person name="Li D."/>
            <person name="Wang L."/>
        </authorList>
    </citation>
    <scope>NUCLEOTIDE SEQUENCE [LARGE SCALE GENOMIC DNA]</scope>
    <source>
        <strain>M66-2</strain>
    </source>
</reference>
<name>Y1816_VIBCM</name>
<sequence length="179" mass="20759">MIIYLHGFDSNSPGNHEKVLQLQFIDSDVRFINYSTLHPKHDMQHLLKEVHKAIEQSGDPNPLICGVGLGGYWSERIGFLCGIKQVIFNPNLHPELTMQGRIDRPEEYEDISTKCVEKFRAKNQGRCLVILSRQDEIHDNQKTAQELQDYYDIVWDDTQTHKFKKISHHLQAMKAFKAA</sequence>
<protein>
    <recommendedName>
        <fullName evidence="1">UPF0227 protein VCM66_1816</fullName>
    </recommendedName>
</protein>
<accession>C3LNJ6</accession>
<organism>
    <name type="scientific">Vibrio cholerae serotype O1 (strain M66-2)</name>
    <dbReference type="NCBI Taxonomy" id="579112"/>
    <lineage>
        <taxon>Bacteria</taxon>
        <taxon>Pseudomonadati</taxon>
        <taxon>Pseudomonadota</taxon>
        <taxon>Gammaproteobacteria</taxon>
        <taxon>Vibrionales</taxon>
        <taxon>Vibrionaceae</taxon>
        <taxon>Vibrio</taxon>
    </lineage>
</organism>
<feature type="chain" id="PRO_1000149610" description="UPF0227 protein VCM66_1816">
    <location>
        <begin position="1"/>
        <end position="179"/>
    </location>
</feature>